<comment type="function">
    <text evidence="1">Transfers an acetyl group from acetyl-CoA to L-homoserine, forming acetyl-L-homoserine.</text>
</comment>
<comment type="catalytic activity">
    <reaction evidence="1">
        <text>L-homoserine + acetyl-CoA = O-acetyl-L-homoserine + CoA</text>
        <dbReference type="Rhea" id="RHEA:13701"/>
        <dbReference type="ChEBI" id="CHEBI:57287"/>
        <dbReference type="ChEBI" id="CHEBI:57288"/>
        <dbReference type="ChEBI" id="CHEBI:57476"/>
        <dbReference type="ChEBI" id="CHEBI:57716"/>
        <dbReference type="EC" id="2.3.1.31"/>
    </reaction>
</comment>
<comment type="pathway">
    <text evidence="1">Amino-acid biosynthesis; L-methionine biosynthesis via de novo pathway; O-acetyl-L-homoserine from L-homoserine: step 1/1.</text>
</comment>
<comment type="subcellular location">
    <subcellularLocation>
        <location evidence="1">Cytoplasm</location>
    </subcellularLocation>
</comment>
<comment type="similarity">
    <text evidence="1">Belongs to the MetA family.</text>
</comment>
<protein>
    <recommendedName>
        <fullName evidence="1">Homoserine O-acetyltransferase</fullName>
        <shortName evidence="1">HAT</shortName>
        <ecNumber evidence="1">2.3.1.31</ecNumber>
    </recommendedName>
    <alternativeName>
        <fullName evidence="1">Homoserine transacetylase</fullName>
        <shortName evidence="1">HTA</shortName>
    </alternativeName>
</protein>
<reference key="1">
    <citation type="journal article" date="2007" name="J. Bacteriol.">
        <title>Genome-wide transcriptional changes in Streptococcus gordonii in response to competence signaling peptide.</title>
        <authorList>
            <person name="Vickerman M.M."/>
            <person name="Iobst S."/>
            <person name="Jesionowski A.M."/>
            <person name="Gill S.R."/>
        </authorList>
    </citation>
    <scope>NUCLEOTIDE SEQUENCE [LARGE SCALE GENOMIC DNA]</scope>
    <source>
        <strain>Challis / ATCC 35105 / BCRC 15272 / CH1 / DL1 / V288</strain>
    </source>
</reference>
<sequence length="313" mass="36524">MPIKIDKKLPAVEILSSENIFVMDDDRADHQDIRPLNILVLNLMPQKMVTETQILRHLANTPLQLTIDFLYMSSHQSKTTRAEHMETFYKTFDEVKNRYFDGLIITGAPVEHLPFEAVDYWEEFQQVIEWSKTHVFSTLHICWGAQAGLYARYGVDKHQMTRKLSGVYSQSADSNNLLFRGFDDEFYAPHSRHTEVLKEDIVNLTNLEILSYGEDTGLSVLASRDLREVYSFGHMEYDRDTLSKEYFRDLKAGKNPHIPENYFKNDDVHETPALCWSSAAALFFNNWINYAVYQETPFDWENPENDASYFAYL</sequence>
<name>METAA_STRGC</name>
<dbReference type="EC" id="2.3.1.31" evidence="1"/>
<dbReference type="EMBL" id="CP000725">
    <property type="protein sequence ID" value="ABV10480.1"/>
    <property type="molecule type" value="Genomic_DNA"/>
</dbReference>
<dbReference type="RefSeq" id="WP_012000419.1">
    <property type="nucleotide sequence ID" value="NC_009785.1"/>
</dbReference>
<dbReference type="SMR" id="A8AWY1"/>
<dbReference type="STRING" id="467705.SGO_1002"/>
<dbReference type="KEGG" id="sgo:SGO_1002"/>
<dbReference type="eggNOG" id="COG1897">
    <property type="taxonomic scope" value="Bacteria"/>
</dbReference>
<dbReference type="HOGENOM" id="CLU_057851_0_1_9"/>
<dbReference type="UniPathway" id="UPA00051">
    <property type="reaction ID" value="UER00074"/>
</dbReference>
<dbReference type="Proteomes" id="UP000001131">
    <property type="component" value="Chromosome"/>
</dbReference>
<dbReference type="GO" id="GO:0005737">
    <property type="term" value="C:cytoplasm"/>
    <property type="evidence" value="ECO:0007669"/>
    <property type="project" value="UniProtKB-SubCell"/>
</dbReference>
<dbReference type="GO" id="GO:0004414">
    <property type="term" value="F:homoserine O-acetyltransferase activity"/>
    <property type="evidence" value="ECO:0007669"/>
    <property type="project" value="UniProtKB-EC"/>
</dbReference>
<dbReference type="GO" id="GO:0008899">
    <property type="term" value="F:homoserine O-succinyltransferase activity"/>
    <property type="evidence" value="ECO:0007669"/>
    <property type="project" value="UniProtKB-UniRule"/>
</dbReference>
<dbReference type="GO" id="GO:0019281">
    <property type="term" value="P:L-methionine biosynthetic process from homoserine via O-succinyl-L-homoserine and cystathionine"/>
    <property type="evidence" value="ECO:0007669"/>
    <property type="project" value="InterPro"/>
</dbReference>
<dbReference type="CDD" id="cd03131">
    <property type="entry name" value="GATase1_HTS"/>
    <property type="match status" value="1"/>
</dbReference>
<dbReference type="FunFam" id="3.40.50.880:FF:000004">
    <property type="entry name" value="Homoserine O-succinyltransferase"/>
    <property type="match status" value="1"/>
</dbReference>
<dbReference type="Gene3D" id="3.40.50.880">
    <property type="match status" value="1"/>
</dbReference>
<dbReference type="HAMAP" id="MF_00295">
    <property type="entry name" value="MetA_acyltransf"/>
    <property type="match status" value="1"/>
</dbReference>
<dbReference type="InterPro" id="IPR029062">
    <property type="entry name" value="Class_I_gatase-like"/>
</dbReference>
<dbReference type="InterPro" id="IPR005697">
    <property type="entry name" value="HST_MetA"/>
</dbReference>
<dbReference type="InterPro" id="IPR033752">
    <property type="entry name" value="MetA_family"/>
</dbReference>
<dbReference type="NCBIfam" id="TIGR01001">
    <property type="entry name" value="metA"/>
    <property type="match status" value="1"/>
</dbReference>
<dbReference type="PANTHER" id="PTHR20919">
    <property type="entry name" value="HOMOSERINE O-SUCCINYLTRANSFERASE"/>
    <property type="match status" value="1"/>
</dbReference>
<dbReference type="PANTHER" id="PTHR20919:SF0">
    <property type="entry name" value="HOMOSERINE O-SUCCINYLTRANSFERASE"/>
    <property type="match status" value="1"/>
</dbReference>
<dbReference type="Pfam" id="PF04204">
    <property type="entry name" value="HTS"/>
    <property type="match status" value="1"/>
</dbReference>
<dbReference type="PIRSF" id="PIRSF000450">
    <property type="entry name" value="H_ser_succinyltr"/>
    <property type="match status" value="1"/>
</dbReference>
<dbReference type="SUPFAM" id="SSF52317">
    <property type="entry name" value="Class I glutamine amidotransferase-like"/>
    <property type="match status" value="1"/>
</dbReference>
<organism>
    <name type="scientific">Streptococcus gordonii (strain Challis / ATCC 35105 / BCRC 15272 / CH1 / DL1 / V288)</name>
    <dbReference type="NCBI Taxonomy" id="467705"/>
    <lineage>
        <taxon>Bacteria</taxon>
        <taxon>Bacillati</taxon>
        <taxon>Bacillota</taxon>
        <taxon>Bacilli</taxon>
        <taxon>Lactobacillales</taxon>
        <taxon>Streptococcaceae</taxon>
        <taxon>Streptococcus</taxon>
    </lineage>
</organism>
<evidence type="ECO:0000255" key="1">
    <source>
        <dbReference type="HAMAP-Rule" id="MF_00295"/>
    </source>
</evidence>
<keyword id="KW-0012">Acyltransferase</keyword>
<keyword id="KW-0028">Amino-acid biosynthesis</keyword>
<keyword id="KW-0963">Cytoplasm</keyword>
<keyword id="KW-0486">Methionine biosynthesis</keyword>
<keyword id="KW-1185">Reference proteome</keyword>
<keyword id="KW-0808">Transferase</keyword>
<gene>
    <name evidence="1" type="primary">metAA</name>
    <name type="ordered locus">SGO_1002</name>
</gene>
<feature type="chain" id="PRO_1000078940" description="Homoserine O-acetyltransferase">
    <location>
        <begin position="1"/>
        <end position="313"/>
    </location>
</feature>
<feature type="active site" description="Acyl-thioester intermediate" evidence="1">
    <location>
        <position position="142"/>
    </location>
</feature>
<feature type="active site" description="Proton acceptor" evidence="1">
    <location>
        <position position="234"/>
    </location>
</feature>
<feature type="active site" evidence="1">
    <location>
        <position position="236"/>
    </location>
</feature>
<feature type="binding site" evidence="1">
    <location>
        <position position="163"/>
    </location>
    <ligand>
        <name>substrate</name>
    </ligand>
</feature>
<feature type="binding site" evidence="1">
    <location>
        <position position="191"/>
    </location>
    <ligand>
        <name>substrate</name>
    </ligand>
</feature>
<feature type="binding site" evidence="1">
    <location>
        <position position="248"/>
    </location>
    <ligand>
        <name>substrate</name>
    </ligand>
</feature>
<feature type="site" description="Important for acyl-CoA specificity" evidence="1">
    <location>
        <position position="111"/>
    </location>
</feature>
<feature type="site" description="Important for substrate specificity" evidence="1">
    <location>
        <position position="191"/>
    </location>
</feature>
<accession>A8AWY1</accession>
<proteinExistence type="inferred from homology"/>